<dbReference type="EC" id="3.4.21.-"/>
<dbReference type="EMBL" id="DS989825">
    <property type="protein sequence ID" value="EFR01997.1"/>
    <property type="molecule type" value="Genomic_DNA"/>
</dbReference>
<dbReference type="RefSeq" id="XP_003172408.1">
    <property type="nucleotide sequence ID" value="XM_003172360.1"/>
</dbReference>
<dbReference type="SMR" id="E4UY04"/>
<dbReference type="STRING" id="535722.E4UY04"/>
<dbReference type="GlyCosmos" id="E4UY04">
    <property type="glycosylation" value="8 sites, No reported glycans"/>
</dbReference>
<dbReference type="GeneID" id="10027677"/>
<dbReference type="VEuPathDB" id="FungiDB:MGYG_05000"/>
<dbReference type="eggNOG" id="KOG1153">
    <property type="taxonomic scope" value="Eukaryota"/>
</dbReference>
<dbReference type="HOGENOM" id="CLU_011263_1_3_1"/>
<dbReference type="InParanoid" id="E4UY04"/>
<dbReference type="OMA" id="GRMGVAN"/>
<dbReference type="OrthoDB" id="206201at2759"/>
<dbReference type="Proteomes" id="UP000002669">
    <property type="component" value="Unassembled WGS sequence"/>
</dbReference>
<dbReference type="GO" id="GO:0005576">
    <property type="term" value="C:extracellular region"/>
    <property type="evidence" value="ECO:0007669"/>
    <property type="project" value="UniProtKB-SubCell"/>
</dbReference>
<dbReference type="GO" id="GO:0004252">
    <property type="term" value="F:serine-type endopeptidase activity"/>
    <property type="evidence" value="ECO:0007669"/>
    <property type="project" value="InterPro"/>
</dbReference>
<dbReference type="GO" id="GO:0006508">
    <property type="term" value="P:proteolysis"/>
    <property type="evidence" value="ECO:0007669"/>
    <property type="project" value="UniProtKB-KW"/>
</dbReference>
<dbReference type="CDD" id="cd04077">
    <property type="entry name" value="Peptidases_S8_PCSK9_ProteinaseK_like"/>
    <property type="match status" value="1"/>
</dbReference>
<dbReference type="FunFam" id="3.40.50.200:FF:000014">
    <property type="entry name" value="Proteinase K"/>
    <property type="match status" value="1"/>
</dbReference>
<dbReference type="Gene3D" id="3.30.70.80">
    <property type="entry name" value="Peptidase S8 propeptide/proteinase inhibitor I9"/>
    <property type="match status" value="1"/>
</dbReference>
<dbReference type="Gene3D" id="3.40.50.200">
    <property type="entry name" value="Peptidase S8/S53 domain"/>
    <property type="match status" value="1"/>
</dbReference>
<dbReference type="InterPro" id="IPR034193">
    <property type="entry name" value="PCSK9_ProteinaseK-like"/>
</dbReference>
<dbReference type="InterPro" id="IPR000209">
    <property type="entry name" value="Peptidase_S8/S53_dom"/>
</dbReference>
<dbReference type="InterPro" id="IPR036852">
    <property type="entry name" value="Peptidase_S8/S53_dom_sf"/>
</dbReference>
<dbReference type="InterPro" id="IPR023828">
    <property type="entry name" value="Peptidase_S8_Ser-AS"/>
</dbReference>
<dbReference type="InterPro" id="IPR050131">
    <property type="entry name" value="Peptidase_S8_subtilisin-like"/>
</dbReference>
<dbReference type="InterPro" id="IPR015500">
    <property type="entry name" value="Peptidase_S8_subtilisin-rel"/>
</dbReference>
<dbReference type="InterPro" id="IPR010259">
    <property type="entry name" value="S8pro/Inhibitor_I9"/>
</dbReference>
<dbReference type="InterPro" id="IPR037045">
    <property type="entry name" value="S8pro/Inhibitor_I9_sf"/>
</dbReference>
<dbReference type="PANTHER" id="PTHR43806:SF11">
    <property type="entry name" value="CEREVISIN-RELATED"/>
    <property type="match status" value="1"/>
</dbReference>
<dbReference type="PANTHER" id="PTHR43806">
    <property type="entry name" value="PEPTIDASE S8"/>
    <property type="match status" value="1"/>
</dbReference>
<dbReference type="Pfam" id="PF05922">
    <property type="entry name" value="Inhibitor_I9"/>
    <property type="match status" value="1"/>
</dbReference>
<dbReference type="Pfam" id="PF00082">
    <property type="entry name" value="Peptidase_S8"/>
    <property type="match status" value="1"/>
</dbReference>
<dbReference type="PRINTS" id="PR00723">
    <property type="entry name" value="SUBTILISIN"/>
</dbReference>
<dbReference type="SUPFAM" id="SSF54897">
    <property type="entry name" value="Protease propeptides/inhibitors"/>
    <property type="match status" value="1"/>
</dbReference>
<dbReference type="SUPFAM" id="SSF52743">
    <property type="entry name" value="Subtilisin-like"/>
    <property type="match status" value="1"/>
</dbReference>
<dbReference type="PROSITE" id="PS51892">
    <property type="entry name" value="SUBTILASE"/>
    <property type="match status" value="1"/>
</dbReference>
<dbReference type="PROSITE" id="PS00138">
    <property type="entry name" value="SUBTILASE_SER"/>
    <property type="match status" value="1"/>
</dbReference>
<proteinExistence type="inferred from homology"/>
<protein>
    <recommendedName>
        <fullName>Subtilisin-like protease 12</fullName>
        <ecNumber>3.4.21.-</ecNumber>
    </recommendedName>
</protein>
<reference key="1">
    <citation type="journal article" date="2012" name="MBio">
        <title>Comparative genome analysis of Trichophyton rubrum and related dermatophytes reveals candidate genes involved in infection.</title>
        <authorList>
            <person name="Martinez D.A."/>
            <person name="Oliver B.G."/>
            <person name="Graeser Y."/>
            <person name="Goldberg J.M."/>
            <person name="Li W."/>
            <person name="Martinez-Rossi N.M."/>
            <person name="Monod M."/>
            <person name="Shelest E."/>
            <person name="Barton R.C."/>
            <person name="Birch E."/>
            <person name="Brakhage A.A."/>
            <person name="Chen Z."/>
            <person name="Gurr S.J."/>
            <person name="Heiman D."/>
            <person name="Heitman J."/>
            <person name="Kosti I."/>
            <person name="Rossi A."/>
            <person name="Saif S."/>
            <person name="Samalova M."/>
            <person name="Saunders C.W."/>
            <person name="Shea T."/>
            <person name="Summerbell R.C."/>
            <person name="Xu J."/>
            <person name="Young S."/>
            <person name="Zeng Q."/>
            <person name="Birren B.W."/>
            <person name="Cuomo C.A."/>
            <person name="White T.C."/>
        </authorList>
    </citation>
    <scope>NUCLEOTIDE SEQUENCE [LARGE SCALE GENOMIC DNA]</scope>
    <source>
        <strain>ATCC MYA-4604 / CBS 118893</strain>
    </source>
</reference>
<name>SUB12_ARTGP</name>
<keyword id="KW-0325">Glycoprotein</keyword>
<keyword id="KW-0378">Hydrolase</keyword>
<keyword id="KW-0645">Protease</keyword>
<keyword id="KW-1185">Reference proteome</keyword>
<keyword id="KW-0964">Secreted</keyword>
<keyword id="KW-0720">Serine protease</keyword>
<keyword id="KW-0732">Signal</keyword>
<keyword id="KW-0843">Virulence</keyword>
<keyword id="KW-0865">Zymogen</keyword>
<accession>E4UY04</accession>
<sequence length="397" mass="43140">MSIFKLMVIYFTLFWVVNAAQLLDLDSHGVIPGAYIVVMKNGVSSHQFSSHVRWLKRAHRRNLAKRVAPFTEGLSSTWDIAGWQAYSGSFDKDTIQEILNHENVEFVEPNREMKAASTIKQENITWGLARISHMENFSHDYVSTYGEGENLTFYGIDSGIDIHQSDFTGRARWGINVADHIDIDCIGHGTHTAGTVAGQSFGILKKASIVSVKVLDCYGHGDTTKYINGLNWAINDAKKRGLLGKSVMNISLGTGRSRAVNEATVRAQEAGIFISVAAGNNAINAEFLSPGSAPELCTVAASTRNDTRAYFSNYGALIDLFAPGEYIRSTLPHNRTGIMSGTSMAAPHVCGIGGLIMAAEGLAPEQVCRRLKELANPAIKYAGFNTTDKLLYNGSGA</sequence>
<feature type="signal peptide" evidence="2">
    <location>
        <begin position="1"/>
        <end position="19"/>
    </location>
</feature>
<feature type="propeptide" id="PRO_0000406408" evidence="1">
    <location>
        <begin position="20"/>
        <end position="116"/>
    </location>
</feature>
<feature type="chain" id="PRO_0000406409" description="Subtilisin-like protease 12">
    <location>
        <begin position="117"/>
        <end position="397"/>
    </location>
</feature>
<feature type="domain" description="Inhibitor I9" evidence="2">
    <location>
        <begin position="35"/>
        <end position="115"/>
    </location>
</feature>
<feature type="domain" description="Peptidase S8" evidence="3">
    <location>
        <begin position="125"/>
        <end position="397"/>
    </location>
</feature>
<feature type="active site" description="Charge relay system" evidence="3">
    <location>
        <position position="157"/>
    </location>
</feature>
<feature type="active site" description="Charge relay system" evidence="3">
    <location>
        <position position="188"/>
    </location>
</feature>
<feature type="active site" description="Charge relay system" evidence="3">
    <location>
        <position position="343"/>
    </location>
</feature>
<feature type="glycosylation site" description="N-linked (GlcNAc...) asparagine" evidence="2">
    <location>
        <position position="123"/>
    </location>
</feature>
<feature type="glycosylation site" description="N-linked (GlcNAc...) asparagine" evidence="2">
    <location>
        <position position="136"/>
    </location>
</feature>
<feature type="glycosylation site" description="N-linked (GlcNAc...) asparagine" evidence="2">
    <location>
        <position position="150"/>
    </location>
</feature>
<feature type="glycosylation site" description="N-linked (GlcNAc...) asparagine" evidence="2">
    <location>
        <position position="249"/>
    </location>
</feature>
<feature type="glycosylation site" description="N-linked (GlcNAc...) asparagine" evidence="2">
    <location>
        <position position="305"/>
    </location>
</feature>
<feature type="glycosylation site" description="N-linked (GlcNAc...) asparagine" evidence="2">
    <location>
        <position position="334"/>
    </location>
</feature>
<feature type="glycosylation site" description="N-linked (GlcNAc...) asparagine" evidence="2">
    <location>
        <position position="385"/>
    </location>
</feature>
<feature type="glycosylation site" description="N-linked (GlcNAc...) asparagine" evidence="2">
    <location>
        <position position="393"/>
    </location>
</feature>
<gene>
    <name type="primary">SUB12</name>
    <name type="ORF">MGYG_05000</name>
</gene>
<comment type="function">
    <text evidence="1">Secreted subtilisin-like serine protease with keratinolytic activity that contributes to pathogenicity.</text>
</comment>
<comment type="subcellular location">
    <subcellularLocation>
        <location evidence="1">Secreted</location>
    </subcellularLocation>
</comment>
<comment type="similarity">
    <text evidence="4">Belongs to the peptidase S8 family.</text>
</comment>
<evidence type="ECO:0000250" key="1"/>
<evidence type="ECO:0000255" key="2"/>
<evidence type="ECO:0000255" key="3">
    <source>
        <dbReference type="PROSITE-ProRule" id="PRU01240"/>
    </source>
</evidence>
<evidence type="ECO:0000305" key="4"/>
<organism>
    <name type="scientific">Arthroderma gypseum (strain ATCC MYA-4604 / CBS 118893)</name>
    <name type="common">Microsporum gypseum</name>
    <dbReference type="NCBI Taxonomy" id="535722"/>
    <lineage>
        <taxon>Eukaryota</taxon>
        <taxon>Fungi</taxon>
        <taxon>Dikarya</taxon>
        <taxon>Ascomycota</taxon>
        <taxon>Pezizomycotina</taxon>
        <taxon>Eurotiomycetes</taxon>
        <taxon>Eurotiomycetidae</taxon>
        <taxon>Onygenales</taxon>
        <taxon>Arthrodermataceae</taxon>
        <taxon>Nannizzia</taxon>
    </lineage>
</organism>